<sequence length="274" mass="29719">MEALRQRIEAAFEARADITPSTVDASVRNDVQNVINMLDKGELRVAEKIDGQWHVHQWLKKAVLLSFRIFDNAVIDGAETKYFDKVPLKFAEYDEARFKAEAIRVVPSATVRKGSFIGKNTVLMPSYVNLGAYVDEGTMVDTWATVGSCAQIGKNVHLSGGVGIGGVLEPLQAGPTIIEDNCFIGARSEIVEGVVVEEGSVISMGVYIGQSTRIYDRETGEIHYGRVPAGSVVVSGNLPSACGKYSLYAAIIVKKVDAKTRGKVGINELLRIVD</sequence>
<comment type="catalytic activity">
    <reaction evidence="1">
        <text>(S)-2,3,4,5-tetrahydrodipicolinate + succinyl-CoA + H2O = (S)-2-succinylamino-6-oxoheptanedioate + CoA</text>
        <dbReference type="Rhea" id="RHEA:17325"/>
        <dbReference type="ChEBI" id="CHEBI:15377"/>
        <dbReference type="ChEBI" id="CHEBI:15685"/>
        <dbReference type="ChEBI" id="CHEBI:16845"/>
        <dbReference type="ChEBI" id="CHEBI:57287"/>
        <dbReference type="ChEBI" id="CHEBI:57292"/>
        <dbReference type="EC" id="2.3.1.117"/>
    </reaction>
</comment>
<comment type="pathway">
    <text evidence="1">Amino-acid biosynthesis; L-lysine biosynthesis via DAP pathway; LL-2,6-diaminopimelate from (S)-tetrahydrodipicolinate (succinylase route): step 1/3.</text>
</comment>
<comment type="subunit">
    <text evidence="1">Homotrimer.</text>
</comment>
<comment type="subcellular location">
    <subcellularLocation>
        <location evidence="1">Cytoplasm</location>
    </subcellularLocation>
</comment>
<comment type="similarity">
    <text evidence="1">Belongs to the transferase hexapeptide repeat family.</text>
</comment>
<keyword id="KW-0012">Acyltransferase</keyword>
<keyword id="KW-0028">Amino-acid biosynthesis</keyword>
<keyword id="KW-0963">Cytoplasm</keyword>
<keyword id="KW-0220">Diaminopimelate biosynthesis</keyword>
<keyword id="KW-0457">Lysine biosynthesis</keyword>
<keyword id="KW-0677">Repeat</keyword>
<keyword id="KW-0808">Transferase</keyword>
<gene>
    <name evidence="1" type="primary">dapD</name>
    <name type="ordered locus">Shewmr4_2644</name>
</gene>
<protein>
    <recommendedName>
        <fullName evidence="1">2,3,4,5-tetrahydropyridine-2,6-dicarboxylate N-succinyltransferase</fullName>
        <ecNumber evidence="1">2.3.1.117</ecNumber>
    </recommendedName>
    <alternativeName>
        <fullName evidence="1">Tetrahydrodipicolinate N-succinyltransferase</fullName>
        <shortName evidence="1">THDP succinyltransferase</shortName>
        <shortName evidence="1">THP succinyltransferase</shortName>
        <shortName evidence="1">Tetrahydropicolinate succinylase</shortName>
    </alternativeName>
</protein>
<dbReference type="EC" id="2.3.1.117" evidence="1"/>
<dbReference type="EMBL" id="CP000446">
    <property type="protein sequence ID" value="ABI39715.1"/>
    <property type="molecule type" value="Genomic_DNA"/>
</dbReference>
<dbReference type="RefSeq" id="WP_011623395.1">
    <property type="nucleotide sequence ID" value="NC_008321.1"/>
</dbReference>
<dbReference type="SMR" id="Q0HGV2"/>
<dbReference type="GeneID" id="94728756"/>
<dbReference type="KEGG" id="she:Shewmr4_2644"/>
<dbReference type="HOGENOM" id="CLU_050859_0_1_6"/>
<dbReference type="UniPathway" id="UPA00034">
    <property type="reaction ID" value="UER00019"/>
</dbReference>
<dbReference type="GO" id="GO:0005737">
    <property type="term" value="C:cytoplasm"/>
    <property type="evidence" value="ECO:0007669"/>
    <property type="project" value="UniProtKB-SubCell"/>
</dbReference>
<dbReference type="GO" id="GO:0008666">
    <property type="term" value="F:2,3,4,5-tetrahydropyridine-2,6-dicarboxylate N-succinyltransferase activity"/>
    <property type="evidence" value="ECO:0007669"/>
    <property type="project" value="UniProtKB-UniRule"/>
</dbReference>
<dbReference type="GO" id="GO:0016779">
    <property type="term" value="F:nucleotidyltransferase activity"/>
    <property type="evidence" value="ECO:0007669"/>
    <property type="project" value="TreeGrafter"/>
</dbReference>
<dbReference type="GO" id="GO:0019877">
    <property type="term" value="P:diaminopimelate biosynthetic process"/>
    <property type="evidence" value="ECO:0007669"/>
    <property type="project" value="UniProtKB-UniRule"/>
</dbReference>
<dbReference type="GO" id="GO:0009089">
    <property type="term" value="P:lysine biosynthetic process via diaminopimelate"/>
    <property type="evidence" value="ECO:0007669"/>
    <property type="project" value="UniProtKB-UniRule"/>
</dbReference>
<dbReference type="CDD" id="cd03350">
    <property type="entry name" value="LbH_THP_succinylT"/>
    <property type="match status" value="1"/>
</dbReference>
<dbReference type="Gene3D" id="2.160.10.10">
    <property type="entry name" value="Hexapeptide repeat proteins"/>
    <property type="match status" value="1"/>
</dbReference>
<dbReference type="Gene3D" id="1.10.166.10">
    <property type="entry name" value="Tetrahydrodipicolinate-N-succinyltransferase, N-terminal domain"/>
    <property type="match status" value="1"/>
</dbReference>
<dbReference type="HAMAP" id="MF_00811">
    <property type="entry name" value="DapD"/>
    <property type="match status" value="1"/>
</dbReference>
<dbReference type="InterPro" id="IPR005664">
    <property type="entry name" value="DapD_Trfase_Hexpep_rpt_fam"/>
</dbReference>
<dbReference type="InterPro" id="IPR001451">
    <property type="entry name" value="Hexapep"/>
</dbReference>
<dbReference type="InterPro" id="IPR018357">
    <property type="entry name" value="Hexapep_transf_CS"/>
</dbReference>
<dbReference type="InterPro" id="IPR023180">
    <property type="entry name" value="THP_succinylTrfase_dom1"/>
</dbReference>
<dbReference type="InterPro" id="IPR037133">
    <property type="entry name" value="THP_succinylTrfase_N_sf"/>
</dbReference>
<dbReference type="InterPro" id="IPR011004">
    <property type="entry name" value="Trimer_LpxA-like_sf"/>
</dbReference>
<dbReference type="NCBIfam" id="TIGR00965">
    <property type="entry name" value="dapD"/>
    <property type="match status" value="1"/>
</dbReference>
<dbReference type="NCBIfam" id="NF008808">
    <property type="entry name" value="PRK11830.1"/>
    <property type="match status" value="1"/>
</dbReference>
<dbReference type="PANTHER" id="PTHR19136:SF52">
    <property type="entry name" value="2,3,4,5-TETRAHYDROPYRIDINE-2,6-DICARBOXYLATE N-SUCCINYLTRANSFERASE"/>
    <property type="match status" value="1"/>
</dbReference>
<dbReference type="PANTHER" id="PTHR19136">
    <property type="entry name" value="MOLYBDENUM COFACTOR GUANYLYLTRANSFERASE"/>
    <property type="match status" value="1"/>
</dbReference>
<dbReference type="Pfam" id="PF14602">
    <property type="entry name" value="Hexapep_2"/>
    <property type="match status" value="1"/>
</dbReference>
<dbReference type="Pfam" id="PF14805">
    <property type="entry name" value="THDPS_N_2"/>
    <property type="match status" value="1"/>
</dbReference>
<dbReference type="SUPFAM" id="SSF51161">
    <property type="entry name" value="Trimeric LpxA-like enzymes"/>
    <property type="match status" value="1"/>
</dbReference>
<dbReference type="PROSITE" id="PS00101">
    <property type="entry name" value="HEXAPEP_TRANSFERASES"/>
    <property type="match status" value="1"/>
</dbReference>
<reference key="1">
    <citation type="submission" date="2006-08" db="EMBL/GenBank/DDBJ databases">
        <title>Complete sequence of Shewanella sp. MR-4.</title>
        <authorList>
            <consortium name="US DOE Joint Genome Institute"/>
            <person name="Copeland A."/>
            <person name="Lucas S."/>
            <person name="Lapidus A."/>
            <person name="Barry K."/>
            <person name="Detter J.C."/>
            <person name="Glavina del Rio T."/>
            <person name="Hammon N."/>
            <person name="Israni S."/>
            <person name="Dalin E."/>
            <person name="Tice H."/>
            <person name="Pitluck S."/>
            <person name="Kiss H."/>
            <person name="Brettin T."/>
            <person name="Bruce D."/>
            <person name="Han C."/>
            <person name="Tapia R."/>
            <person name="Gilna P."/>
            <person name="Schmutz J."/>
            <person name="Larimer F."/>
            <person name="Land M."/>
            <person name="Hauser L."/>
            <person name="Kyrpides N."/>
            <person name="Mikhailova N."/>
            <person name="Nealson K."/>
            <person name="Konstantinidis K."/>
            <person name="Klappenbach J."/>
            <person name="Tiedje J."/>
            <person name="Richardson P."/>
        </authorList>
    </citation>
    <scope>NUCLEOTIDE SEQUENCE [LARGE SCALE GENOMIC DNA]</scope>
    <source>
        <strain>MR-4</strain>
    </source>
</reference>
<organism>
    <name type="scientific">Shewanella sp. (strain MR-4)</name>
    <dbReference type="NCBI Taxonomy" id="60480"/>
    <lineage>
        <taxon>Bacteria</taxon>
        <taxon>Pseudomonadati</taxon>
        <taxon>Pseudomonadota</taxon>
        <taxon>Gammaproteobacteria</taxon>
        <taxon>Alteromonadales</taxon>
        <taxon>Shewanellaceae</taxon>
        <taxon>Shewanella</taxon>
    </lineage>
</organism>
<feature type="chain" id="PRO_1000047188" description="2,3,4,5-tetrahydropyridine-2,6-dicarboxylate N-succinyltransferase">
    <location>
        <begin position="1"/>
        <end position="274"/>
    </location>
</feature>
<feature type="binding site" evidence="1">
    <location>
        <position position="104"/>
    </location>
    <ligand>
        <name>substrate</name>
    </ligand>
</feature>
<feature type="binding site" evidence="1">
    <location>
        <position position="141"/>
    </location>
    <ligand>
        <name>substrate</name>
    </ligand>
</feature>
<accession>Q0HGV2</accession>
<evidence type="ECO:0000255" key="1">
    <source>
        <dbReference type="HAMAP-Rule" id="MF_00811"/>
    </source>
</evidence>
<proteinExistence type="inferred from homology"/>
<name>DAPD_SHESM</name>